<comment type="function">
    <text evidence="4 6 7 11">Component of a complex required to localize phosphatidylinositol 4-kinase (PI4K) to the plasma membrane (PubMed:23229899, PubMed:25608530, PubMed:26571211). The complex acts as a regulator of phosphatidylinositol 4-phosphate (PtdIns(4)P) synthesis (Probable). In the complex, EFR3A probably acts as the membrane-anchoring component (PubMed:23229899). Also involved in responsiveness to G-protein-coupled receptors; it is however unclear whether this role is direct or indirect (PubMed:25380825).</text>
</comment>
<comment type="subunit">
    <text evidence="8">Component of a phosphatidylinositol 4-kinase (PI4K) complex, composed of PI4KA, EFR3 (EFR3A or EFR3B), TTC7 (TTC7A or TTC7B) and HYCC (HYCC1 or HYCC2) (PubMed:26571211).</text>
</comment>
<comment type="subcellular location">
    <subcellularLocation>
        <location evidence="4 6">Cell membrane</location>
        <topology evidence="4 6">Lipid-anchor</topology>
    </subcellularLocation>
    <subcellularLocation>
        <location evidence="6">Cytoplasm</location>
        <location evidence="6">Cytosol</location>
    </subcellularLocation>
    <text evidence="4 6 8">Palmitoylation anchors the protein to the plasma membrane (PubMed:23229899, PubMed:25380825, PubMed:26571211). A small amount is observed in the cytosol (PubMed:25380825).</text>
</comment>
<comment type="alternative products">
    <event type="alternative splicing"/>
    <isoform>
        <id>Q14156-1</id>
        <name>1</name>
        <sequence type="displayed"/>
    </isoform>
    <isoform>
        <id>Q14156-2</id>
        <name>2</name>
        <sequence type="described" ref="VSP_022217"/>
    </isoform>
    <isoform>
        <id>Q14156-3</id>
        <name>3</name>
        <sequence type="described" ref="VSP_022218"/>
    </isoform>
</comment>
<comment type="PTM">
    <text evidence="4 6">Palmitoylated at its N-terminus, anchoring the protein to the plasma membrane.</text>
</comment>
<comment type="disease">
    <text evidence="12">Genetic variations in EFR3A may be associated with susceptibility to autism.</text>
</comment>
<comment type="similarity">
    <text evidence="11">Belongs to the EFR3 family.</text>
</comment>
<comment type="sequence caution" evidence="11">
    <conflict type="erroneous initiation">
        <sequence resource="EMBL-CDS" id="AAH71611"/>
    </conflict>
    <text>Extended N-terminus.</text>
</comment>
<comment type="sequence caution" evidence="11">
    <conflict type="erroneous initiation">
        <sequence resource="EMBL-CDS" id="AAI08668"/>
    </conflict>
    <text>Extended N-terminus.</text>
</comment>
<comment type="sequence caution" evidence="11">
    <conflict type="miscellaneous discrepancy">
        <sequence resource="EMBL-CDS" id="AAI08668"/>
    </conflict>
    <text>Contaminating sequence. Potential poly-A sequence.</text>
</comment>
<comment type="sequence caution" evidence="11">
    <conflict type="erroneous initiation">
        <sequence resource="EMBL-CDS" id="BAA09764"/>
    </conflict>
    <text>Extended N-terminus.</text>
</comment>
<feature type="chain" id="PRO_0000050724" description="Protein EFR3 homolog A">
    <location>
        <begin position="1"/>
        <end position="821"/>
    </location>
</feature>
<feature type="modified residue" description="Phosphoserine" evidence="1">
    <location>
        <position position="360"/>
    </location>
</feature>
<feature type="modified residue" description="Phosphoserine" evidence="1">
    <location>
        <position position="363"/>
    </location>
</feature>
<feature type="modified residue" description="Phosphoserine" evidence="16">
    <location>
        <position position="422"/>
    </location>
</feature>
<feature type="modified residue" description="Phosphoserine" evidence="14 15 17 18">
    <location>
        <position position="694"/>
    </location>
</feature>
<feature type="splice variant" id="VSP_022217" description="In isoform 2." evidence="9">
    <location>
        <begin position="1"/>
        <end position="36"/>
    </location>
</feature>
<feature type="splice variant" id="VSP_022218" description="In isoform 3." evidence="9">
    <location>
        <begin position="619"/>
        <end position="662"/>
    </location>
</feature>
<feature type="sequence variant" id="VAR_075101" evidence="5">
    <original>P</original>
    <variation>R</variation>
    <location>
        <position position="14"/>
    </location>
</feature>
<feature type="sequence variant" id="VAR_075102" evidence="5">
    <original>K</original>
    <variation>E</variation>
    <location>
        <position position="50"/>
    </location>
</feature>
<feature type="sequence variant" id="VAR_075103" description="In dbSNP:rs749463078." evidence="5">
    <original>G</original>
    <variation>C</variation>
    <location>
        <position position="55"/>
    </location>
</feature>
<feature type="sequence variant" id="VAR_075104" description="In dbSNP:rs1212454955." evidence="5">
    <original>R</original>
    <variation>C</variation>
    <location>
        <position position="70"/>
    </location>
</feature>
<feature type="sequence variant" id="VAR_075105" evidence="5">
    <original>F</original>
    <variation>L</variation>
    <location>
        <position position="100"/>
    </location>
</feature>
<feature type="sequence variant" id="VAR_075106" description="In dbSNP:rs1818455073." evidence="5">
    <original>L</original>
    <variation>P</variation>
    <location>
        <position position="118"/>
    </location>
</feature>
<feature type="sequence variant" id="VAR_075107" description="In dbSNP:rs1323253445." evidence="5">
    <original>F</original>
    <variation>L</variation>
    <location>
        <position position="123"/>
    </location>
</feature>
<feature type="sequence variant" id="VAR_075108" description="In dbSNP:rs780864616." evidence="5">
    <original>M</original>
    <variation>V</variation>
    <location>
        <position position="194"/>
    </location>
</feature>
<feature type="sequence variant" id="VAR_075109" description="In dbSNP:rs1818959817." evidence="5">
    <original>G</original>
    <variation>A</variation>
    <location>
        <position position="243"/>
    </location>
</feature>
<feature type="sequence variant" id="VAR_075110" evidence="5">
    <original>D</original>
    <variation>G</variation>
    <location>
        <position position="268"/>
    </location>
</feature>
<feature type="sequence variant" id="VAR_075111" evidence="5">
    <original>E</original>
    <variation>D</variation>
    <location>
        <position position="320"/>
    </location>
</feature>
<feature type="sequence variant" id="VAR_075112" description="In dbSNP:rs774959333." evidence="5">
    <original>A</original>
    <variation>S</variation>
    <location>
        <position position="321"/>
    </location>
</feature>
<feature type="sequence variant" id="VAR_075113" evidence="5">
    <original>V</original>
    <variation>L</variation>
    <location>
        <position position="337"/>
    </location>
</feature>
<feature type="sequence variant" id="VAR_075114" description="In dbSNP:rs1395349665." evidence="5">
    <original>F</original>
    <variation>S</variation>
    <location>
        <position position="338"/>
    </location>
</feature>
<feature type="sequence variant" id="VAR_075115" description="In dbSNP:rs754610866." evidence="5">
    <original>N</original>
    <variation>D</variation>
    <location>
        <position position="354"/>
    </location>
</feature>
<feature type="sequence variant" id="VAR_047247" description="In dbSNP:rs2270877.">
    <original>G</original>
    <variation>R</variation>
    <location>
        <position position="358"/>
    </location>
</feature>
<feature type="sequence variant" id="VAR_047248" description="In dbSNP:rs1051221." evidence="2 3">
    <original>N</original>
    <variation>D</variation>
    <location>
        <position position="365"/>
    </location>
</feature>
<feature type="sequence variant" id="VAR_075116" description="In dbSNP:rs770980074." evidence="5">
    <original>T</original>
    <variation>M</variation>
    <location>
        <position position="451"/>
    </location>
</feature>
<feature type="sequence variant" id="VAR_075117" evidence="5">
    <original>D</original>
    <variation>G</variation>
    <location>
        <position position="504"/>
    </location>
</feature>
<feature type="sequence variant" id="VAR_075118" evidence="5">
    <original>L</original>
    <variation>P</variation>
    <location>
        <position position="508"/>
    </location>
</feature>
<feature type="sequence variant" id="VAR_075119" evidence="5">
    <original>I</original>
    <variation>V</variation>
    <location>
        <position position="510"/>
    </location>
</feature>
<feature type="sequence variant" id="VAR_075120" description="In dbSNP:rs1820754943." evidence="5">
    <original>Q</original>
    <variation>R</variation>
    <location>
        <position position="528"/>
    </location>
</feature>
<feature type="sequence variant" id="VAR_075121" description="In dbSNP:rs779475356." evidence="5">
    <original>R</original>
    <variation>W</variation>
    <location>
        <position position="532"/>
    </location>
</feature>
<feature type="sequence variant" id="VAR_075122" description="In dbSNP:rs374094815." evidence="5">
    <original>I</original>
    <variation>T</variation>
    <location>
        <position position="534"/>
    </location>
</feature>
<feature type="sequence variant" id="VAR_075123" evidence="5">
    <original>D</original>
    <variation>V</variation>
    <location>
        <position position="570"/>
    </location>
</feature>
<feature type="sequence variant" id="VAR_075124" description="In dbSNP:rs759848268." evidence="5">
    <original>M</original>
    <variation>V</variation>
    <location>
        <position position="646"/>
    </location>
</feature>
<feature type="sequence variant" id="VAR_075125" description="In dbSNP:rs1467962026." evidence="5">
    <original>T</original>
    <variation>A</variation>
    <location>
        <position position="785"/>
    </location>
</feature>
<feature type="mutagenesis site" description="Induces localization to the cytosol." evidence="4 6">
    <original>CCCC</original>
    <variation>SSSS</variation>
    <location>
        <begin position="6"/>
        <end position="9"/>
    </location>
</feature>
<feature type="sequence conflict" description="In Ref. 2; CAH56143." evidence="11" ref="2">
    <original>L</original>
    <variation>P</variation>
    <location>
        <position position="486"/>
    </location>
</feature>
<feature type="sequence conflict" description="In Ref. 2; CAH56143." evidence="11" ref="2">
    <original>R</original>
    <variation>G</variation>
    <location>
        <position position="696"/>
    </location>
</feature>
<protein>
    <recommendedName>
        <fullName evidence="11">Protein EFR3 homolog A</fullName>
    </recommendedName>
    <alternativeName>
        <fullName>Protein EFR3-like</fullName>
    </alternativeName>
</protein>
<proteinExistence type="evidence at protein level"/>
<sequence length="821" mass="92924">MPTRVCCCCSALRPRYKRLVDNIFPEDPKDGLVKTDMEKLTFYAVSAPEKLDRIGSYLAERLSRDVVRHRSGYVLIAMEALDQLLMACHSQSIKPFVESFLHMVAKLLESGEPKLQVLGTNSFVKFANIEEDTPSYHRRYDFFVSRFSAMCHSCHSDPEIRTEIRIAGIRGIQGVVRKTVNDELRATIWEPQHMDKIVPSLLFNMQKIEEVDSRIGPPSSPSATDKEENPAVLAENCFRELLGRATFGNMNNAVRPVFAHLDHHKLWDPNEFAVHCFKIIMYSIQAQYSHHVIQEILGHLDARKKDAPRVRAGIIQVLLEAVAIAAKGSIGPTVLEVFNTLLKHLRLSVEFEANDLQGGSVGSVNLNTSSKDNDEKIVQNAIIQTIGFFGSNLPDYQRSEIMMFIMGKVPVFGTSTHTLDISQLGDLGTRRIQIMLLRSLLMVTSGYKAKTIVTALPGSFLDPLLSPSLMEDYELRQLVLEVMHNLMDRHDNRAKLRGIRIIPDVADLKIKREKICRQDTSFMKKNGQQLYRHIYLGCKEEDNVQKNYELLYTSLALITIELANEEVVIDLIRLAIALQDSAIINEDNLPMFHRCGIMALVAAYLNFVSQMIAVPAFCQHVSKVIEIRTMEAPYFLPEHIFRDKCMLPKSLEKHEKDLYFLTNKIAESLGGSGYSVERLSVPYVPQVTDEDRLSRRKSIVDTVSIQVDILSNNVPSDDVVSNTEEITFEALKKAIDTSGMEEQEKEKRRLVIEKFQKAPFEEIAAQCESKANLLHDRLAQILELTIRPPPSPSGTLTITSGHAQYQSVPVYEMKFPDLCVY</sequence>
<keyword id="KW-0002">3D-structure</keyword>
<keyword id="KW-0025">Alternative splicing</keyword>
<keyword id="KW-1269">Autism</keyword>
<keyword id="KW-1268">Autism spectrum disorder</keyword>
<keyword id="KW-1003">Cell membrane</keyword>
<keyword id="KW-0963">Cytoplasm</keyword>
<keyword id="KW-0449">Lipoprotein</keyword>
<keyword id="KW-0472">Membrane</keyword>
<keyword id="KW-0564">Palmitate</keyword>
<keyword id="KW-0597">Phosphoprotein</keyword>
<keyword id="KW-1267">Proteomics identification</keyword>
<keyword id="KW-1185">Reference proteome</keyword>
<name>EFR3A_HUMAN</name>
<dbReference type="EMBL" id="D63477">
    <property type="protein sequence ID" value="BAA09764.1"/>
    <property type="status" value="ALT_INIT"/>
    <property type="molecule type" value="mRNA"/>
</dbReference>
<dbReference type="EMBL" id="BX648595">
    <property type="protein sequence ID" value="CAH56143.1"/>
    <property type="molecule type" value="mRNA"/>
</dbReference>
<dbReference type="EMBL" id="CR749243">
    <property type="protein sequence ID" value="CAH18099.1"/>
    <property type="molecule type" value="mRNA"/>
</dbReference>
<dbReference type="EMBL" id="AC092817">
    <property type="status" value="NOT_ANNOTATED_CDS"/>
    <property type="molecule type" value="Genomic_DNA"/>
</dbReference>
<dbReference type="EMBL" id="BC071611">
    <property type="protein sequence ID" value="AAH71611.1"/>
    <property type="status" value="ALT_INIT"/>
    <property type="molecule type" value="mRNA"/>
</dbReference>
<dbReference type="EMBL" id="BC108667">
    <property type="protein sequence ID" value="AAI08668.1"/>
    <property type="status" value="ALT_SEQ"/>
    <property type="molecule type" value="mRNA"/>
</dbReference>
<dbReference type="EMBL" id="BC152442">
    <property type="protein sequence ID" value="AAI52443.1"/>
    <property type="molecule type" value="mRNA"/>
</dbReference>
<dbReference type="CCDS" id="CCDS34942.2">
    <molecule id="Q14156-1"/>
</dbReference>
<dbReference type="CCDS" id="CCDS83328.1">
    <molecule id="Q14156-2"/>
</dbReference>
<dbReference type="RefSeq" id="NP_001310482.1">
    <molecule id="Q14156-2"/>
    <property type="nucleotide sequence ID" value="NM_001323553.2"/>
</dbReference>
<dbReference type="RefSeq" id="NP_001310483.1">
    <molecule id="Q14156-2"/>
    <property type="nucleotide sequence ID" value="NM_001323554.2"/>
</dbReference>
<dbReference type="RefSeq" id="NP_001310484.1">
    <molecule id="Q14156-2"/>
    <property type="nucleotide sequence ID" value="NM_001323555.2"/>
</dbReference>
<dbReference type="RefSeq" id="NP_001310485.1">
    <molecule id="Q14156-2"/>
    <property type="nucleotide sequence ID" value="NM_001323556.2"/>
</dbReference>
<dbReference type="RefSeq" id="NP_001310486.1">
    <molecule id="Q14156-2"/>
    <property type="nucleotide sequence ID" value="NM_001323557.2"/>
</dbReference>
<dbReference type="RefSeq" id="NP_001310487.1">
    <property type="nucleotide sequence ID" value="NM_001323558.1"/>
</dbReference>
<dbReference type="RefSeq" id="NP_055952.2">
    <molecule id="Q14156-1"/>
    <property type="nucleotide sequence ID" value="NM_015137.6"/>
</dbReference>
<dbReference type="PDB" id="9BAX">
    <property type="method" value="EM"/>
    <property type="resolution" value="3.65 A"/>
    <property type="chains" value="C/H=721-791"/>
</dbReference>
<dbReference type="PDBsum" id="9BAX"/>
<dbReference type="EMDB" id="EMD-44413"/>
<dbReference type="SMR" id="Q14156"/>
<dbReference type="BioGRID" id="116779">
    <property type="interactions" value="121"/>
</dbReference>
<dbReference type="FunCoup" id="Q14156">
    <property type="interactions" value="2671"/>
</dbReference>
<dbReference type="IntAct" id="Q14156">
    <property type="interactions" value="56"/>
</dbReference>
<dbReference type="MINT" id="Q14156"/>
<dbReference type="STRING" id="9606.ENSP00000254624"/>
<dbReference type="GlyGen" id="Q14156">
    <property type="glycosylation" value="2 sites, 1 O-linked glycan (1 site)"/>
</dbReference>
<dbReference type="iPTMnet" id="Q14156"/>
<dbReference type="PhosphoSitePlus" id="Q14156"/>
<dbReference type="SwissPalm" id="Q14156"/>
<dbReference type="BioMuta" id="EFR3A"/>
<dbReference type="DMDM" id="122065174"/>
<dbReference type="jPOST" id="Q14156"/>
<dbReference type="MassIVE" id="Q14156"/>
<dbReference type="PaxDb" id="9606-ENSP00000254624"/>
<dbReference type="PeptideAtlas" id="Q14156"/>
<dbReference type="ProteomicsDB" id="59864">
    <molecule id="Q14156-1"/>
</dbReference>
<dbReference type="ProteomicsDB" id="59865">
    <molecule id="Q14156-2"/>
</dbReference>
<dbReference type="ProteomicsDB" id="59866">
    <molecule id="Q14156-3"/>
</dbReference>
<dbReference type="Pumba" id="Q14156"/>
<dbReference type="Antibodypedia" id="14097">
    <property type="antibodies" value="118 antibodies from 17 providers"/>
</dbReference>
<dbReference type="DNASU" id="23167"/>
<dbReference type="Ensembl" id="ENST00000254624.10">
    <molecule id="Q14156-1"/>
    <property type="protein sequence ID" value="ENSP00000254624.5"/>
    <property type="gene ID" value="ENSG00000132294.15"/>
</dbReference>
<dbReference type="Ensembl" id="ENST00000519656.1">
    <molecule id="Q14156-2"/>
    <property type="protein sequence ID" value="ENSP00000428086.1"/>
    <property type="gene ID" value="ENSG00000132294.15"/>
</dbReference>
<dbReference type="GeneID" id="23167"/>
<dbReference type="KEGG" id="hsa:23167"/>
<dbReference type="MANE-Select" id="ENST00000254624.10">
    <property type="protein sequence ID" value="ENSP00000254624.5"/>
    <property type="RefSeq nucleotide sequence ID" value="NM_015137.6"/>
    <property type="RefSeq protein sequence ID" value="NP_055952.2"/>
</dbReference>
<dbReference type="UCSC" id="uc003yte.4">
    <molecule id="Q14156-1"/>
    <property type="organism name" value="human"/>
</dbReference>
<dbReference type="AGR" id="HGNC:28970"/>
<dbReference type="CTD" id="23167"/>
<dbReference type="DisGeNET" id="23167"/>
<dbReference type="GeneCards" id="EFR3A"/>
<dbReference type="HGNC" id="HGNC:28970">
    <property type="gene designation" value="EFR3A"/>
</dbReference>
<dbReference type="HPA" id="ENSG00000132294">
    <property type="expression patterns" value="Tissue enhanced (retina)"/>
</dbReference>
<dbReference type="MalaCards" id="EFR3A"/>
<dbReference type="MIM" id="611798">
    <property type="type" value="gene"/>
</dbReference>
<dbReference type="neXtProt" id="NX_Q14156"/>
<dbReference type="OpenTargets" id="ENSG00000132294"/>
<dbReference type="PharmGKB" id="PA162384422"/>
<dbReference type="VEuPathDB" id="HostDB:ENSG00000132294"/>
<dbReference type="eggNOG" id="KOG1877">
    <property type="taxonomic scope" value="Eukaryota"/>
</dbReference>
<dbReference type="GeneTree" id="ENSGT00390000002143"/>
<dbReference type="HOGENOM" id="CLU_012674_1_0_1"/>
<dbReference type="InParanoid" id="Q14156"/>
<dbReference type="OMA" id="QMCHANP"/>
<dbReference type="OrthoDB" id="19232at2759"/>
<dbReference type="PAN-GO" id="Q14156">
    <property type="GO annotations" value="2 GO annotations based on evolutionary models"/>
</dbReference>
<dbReference type="PhylomeDB" id="Q14156"/>
<dbReference type="TreeFam" id="TF314098"/>
<dbReference type="PathwayCommons" id="Q14156"/>
<dbReference type="SignaLink" id="Q14156"/>
<dbReference type="SIGNOR" id="Q14156"/>
<dbReference type="BioGRID-ORCS" id="23167">
    <property type="hits" value="264 hits in 1175 CRISPR screens"/>
</dbReference>
<dbReference type="CD-CODE" id="FB4E32DD">
    <property type="entry name" value="Presynaptic clusters and postsynaptic densities"/>
</dbReference>
<dbReference type="ChiTaRS" id="EFR3A">
    <property type="organism name" value="human"/>
</dbReference>
<dbReference type="GenomeRNAi" id="23167"/>
<dbReference type="Pharos" id="Q14156">
    <property type="development level" value="Tbio"/>
</dbReference>
<dbReference type="PRO" id="PR:Q14156"/>
<dbReference type="Proteomes" id="UP000005640">
    <property type="component" value="Chromosome 8"/>
</dbReference>
<dbReference type="RNAct" id="Q14156">
    <property type="molecule type" value="protein"/>
</dbReference>
<dbReference type="Bgee" id="ENSG00000132294">
    <property type="expression patterns" value="Expressed in choroid plexus epithelium and 207 other cell types or tissues"/>
</dbReference>
<dbReference type="ExpressionAtlas" id="Q14156">
    <property type="expression patterns" value="baseline and differential"/>
</dbReference>
<dbReference type="GO" id="GO:0005829">
    <property type="term" value="C:cytosol"/>
    <property type="evidence" value="ECO:0000314"/>
    <property type="project" value="HPA"/>
</dbReference>
<dbReference type="GO" id="GO:0098978">
    <property type="term" value="C:glutamatergic synapse"/>
    <property type="evidence" value="ECO:0007669"/>
    <property type="project" value="Ensembl"/>
</dbReference>
<dbReference type="GO" id="GO:0005886">
    <property type="term" value="C:plasma membrane"/>
    <property type="evidence" value="ECO:0000314"/>
    <property type="project" value="HPA"/>
</dbReference>
<dbReference type="GO" id="GO:0098793">
    <property type="term" value="C:presynapse"/>
    <property type="evidence" value="ECO:0007669"/>
    <property type="project" value="GOC"/>
</dbReference>
<dbReference type="GO" id="GO:0046854">
    <property type="term" value="P:phosphatidylinositol phosphate biosynthetic process"/>
    <property type="evidence" value="ECO:0000304"/>
    <property type="project" value="UniProtKB"/>
</dbReference>
<dbReference type="GO" id="GO:0072659">
    <property type="term" value="P:protein localization to plasma membrane"/>
    <property type="evidence" value="ECO:0000315"/>
    <property type="project" value="UniProtKB"/>
</dbReference>
<dbReference type="GO" id="GO:0016082">
    <property type="term" value="P:synaptic vesicle priming"/>
    <property type="evidence" value="ECO:0007669"/>
    <property type="project" value="Ensembl"/>
</dbReference>
<dbReference type="FunFam" id="1.25.10.10:FF:000347">
    <property type="entry name" value="EFR3 homolog A (S. cerevisiae)"/>
    <property type="match status" value="1"/>
</dbReference>
<dbReference type="InterPro" id="IPR016024">
    <property type="entry name" value="ARM-type_fold"/>
</dbReference>
<dbReference type="InterPro" id="IPR049152">
    <property type="entry name" value="EFR3-like_ARM"/>
</dbReference>
<dbReference type="InterPro" id="IPR051851">
    <property type="entry name" value="EFR3_Homologs"/>
</dbReference>
<dbReference type="PANTHER" id="PTHR12444:SF1">
    <property type="entry name" value="PROTEIN EFR3 HOMOLOG A"/>
    <property type="match status" value="1"/>
</dbReference>
<dbReference type="PANTHER" id="PTHR12444">
    <property type="entry name" value="PROTEIN EFR3 HOMOLOG CMP44E"/>
    <property type="match status" value="1"/>
</dbReference>
<dbReference type="Pfam" id="PF21052">
    <property type="entry name" value="EFR3_ARM"/>
    <property type="match status" value="1"/>
</dbReference>
<dbReference type="SUPFAM" id="SSF48371">
    <property type="entry name" value="ARM repeat"/>
    <property type="match status" value="1"/>
</dbReference>
<evidence type="ECO:0000250" key="1">
    <source>
        <dbReference type="UniProtKB" id="Q8BG67"/>
    </source>
</evidence>
<evidence type="ECO:0000269" key="2">
    <source>
    </source>
</evidence>
<evidence type="ECO:0000269" key="3">
    <source>
    </source>
</evidence>
<evidence type="ECO:0000269" key="4">
    <source>
    </source>
</evidence>
<evidence type="ECO:0000269" key="5">
    <source>
    </source>
</evidence>
<evidence type="ECO:0000269" key="6">
    <source>
    </source>
</evidence>
<evidence type="ECO:0000269" key="7">
    <source>
    </source>
</evidence>
<evidence type="ECO:0000269" key="8">
    <source>
    </source>
</evidence>
<evidence type="ECO:0000303" key="9">
    <source>
    </source>
</evidence>
<evidence type="ECO:0000303" key="10">
    <source>
    </source>
</evidence>
<evidence type="ECO:0000305" key="11"/>
<evidence type="ECO:0000305" key="12">
    <source>
    </source>
</evidence>
<evidence type="ECO:0000312" key="13">
    <source>
        <dbReference type="HGNC" id="HGNC:28970"/>
    </source>
</evidence>
<evidence type="ECO:0007744" key="14">
    <source>
    </source>
</evidence>
<evidence type="ECO:0007744" key="15">
    <source>
    </source>
</evidence>
<evidence type="ECO:0007744" key="16">
    <source>
    </source>
</evidence>
<evidence type="ECO:0007744" key="17">
    <source>
    </source>
</evidence>
<evidence type="ECO:0007744" key="18">
    <source>
    </source>
</evidence>
<accession>Q14156</accession>
<accession>A7MD19</accession>
<accession>Q2VPK2</accession>
<accession>Q63HL7</accession>
<accession>Q68DX1</accession>
<accession>Q6IQ18</accession>
<reference key="1">
    <citation type="journal article" date="1995" name="DNA Res.">
        <title>Prediction of the coding sequences of unidentified human genes. IV. The coding sequences of 40 new genes (KIAA0121-KIAA0160) deduced by analysis of cDNA clones from human cell line KG-1.</title>
        <authorList>
            <person name="Nagase T."/>
            <person name="Seki N."/>
            <person name="Tanaka A."/>
            <person name="Ishikawa K."/>
            <person name="Nomura N."/>
        </authorList>
    </citation>
    <scope>NUCLEOTIDE SEQUENCE [LARGE SCALE MRNA] (ISOFORM 1)</scope>
    <source>
        <tissue>Bone marrow</tissue>
    </source>
</reference>
<reference key="2">
    <citation type="journal article" date="2007" name="BMC Genomics">
        <title>The full-ORF clone resource of the German cDNA consortium.</title>
        <authorList>
            <person name="Bechtel S."/>
            <person name="Rosenfelder H."/>
            <person name="Duda A."/>
            <person name="Schmidt C.P."/>
            <person name="Ernst U."/>
            <person name="Wellenreuther R."/>
            <person name="Mehrle A."/>
            <person name="Schuster C."/>
            <person name="Bahr A."/>
            <person name="Bloecker H."/>
            <person name="Heubner D."/>
            <person name="Hoerlein A."/>
            <person name="Michel G."/>
            <person name="Wedler H."/>
            <person name="Koehrer K."/>
            <person name="Ottenwaelder B."/>
            <person name="Poustka A."/>
            <person name="Wiemann S."/>
            <person name="Schupp I."/>
        </authorList>
    </citation>
    <scope>NUCLEOTIDE SEQUENCE [LARGE SCALE MRNA] (ISOFORM 2)</scope>
    <scope>NUCLEOTIDE SEQUENCE [LARGE SCALE MRNA] OF 469-821 (ISOFORM 3)</scope>
    <scope>VARIANT ASP-365</scope>
    <source>
        <tissue>Rectum tumor</tissue>
        <tissue>Retina</tissue>
    </source>
</reference>
<reference key="3">
    <citation type="journal article" date="2006" name="Nature">
        <title>DNA sequence and analysis of human chromosome 8.</title>
        <authorList>
            <person name="Nusbaum C."/>
            <person name="Mikkelsen T.S."/>
            <person name="Zody M.C."/>
            <person name="Asakawa S."/>
            <person name="Taudien S."/>
            <person name="Garber M."/>
            <person name="Kodira C.D."/>
            <person name="Schueler M.G."/>
            <person name="Shimizu A."/>
            <person name="Whittaker C.A."/>
            <person name="Chang J.L."/>
            <person name="Cuomo C.A."/>
            <person name="Dewar K."/>
            <person name="FitzGerald M.G."/>
            <person name="Yang X."/>
            <person name="Allen N.R."/>
            <person name="Anderson S."/>
            <person name="Asakawa T."/>
            <person name="Blechschmidt K."/>
            <person name="Bloom T."/>
            <person name="Borowsky M.L."/>
            <person name="Butler J."/>
            <person name="Cook A."/>
            <person name="Corum B."/>
            <person name="DeArellano K."/>
            <person name="DeCaprio D."/>
            <person name="Dooley K.T."/>
            <person name="Dorris L. III"/>
            <person name="Engels R."/>
            <person name="Gloeckner G."/>
            <person name="Hafez N."/>
            <person name="Hagopian D.S."/>
            <person name="Hall J.L."/>
            <person name="Ishikawa S.K."/>
            <person name="Jaffe D.B."/>
            <person name="Kamat A."/>
            <person name="Kudoh J."/>
            <person name="Lehmann R."/>
            <person name="Lokitsang T."/>
            <person name="Macdonald P."/>
            <person name="Major J.E."/>
            <person name="Matthews C.D."/>
            <person name="Mauceli E."/>
            <person name="Menzel U."/>
            <person name="Mihalev A.H."/>
            <person name="Minoshima S."/>
            <person name="Murayama Y."/>
            <person name="Naylor J.W."/>
            <person name="Nicol R."/>
            <person name="Nguyen C."/>
            <person name="O'Leary S.B."/>
            <person name="O'Neill K."/>
            <person name="Parker S.C.J."/>
            <person name="Polley A."/>
            <person name="Raymond C.K."/>
            <person name="Reichwald K."/>
            <person name="Rodriguez J."/>
            <person name="Sasaki T."/>
            <person name="Schilhabel M."/>
            <person name="Siddiqui R."/>
            <person name="Smith C.L."/>
            <person name="Sneddon T.P."/>
            <person name="Talamas J.A."/>
            <person name="Tenzin P."/>
            <person name="Topham K."/>
            <person name="Venkataraman V."/>
            <person name="Wen G."/>
            <person name="Yamazaki S."/>
            <person name="Young S.K."/>
            <person name="Zeng Q."/>
            <person name="Zimmer A.R."/>
            <person name="Rosenthal A."/>
            <person name="Birren B.W."/>
            <person name="Platzer M."/>
            <person name="Shimizu N."/>
            <person name="Lander E.S."/>
        </authorList>
    </citation>
    <scope>NUCLEOTIDE SEQUENCE [LARGE SCALE GENOMIC DNA]</scope>
</reference>
<reference key="4">
    <citation type="journal article" date="2004" name="Genome Res.">
        <title>The status, quality, and expansion of the NIH full-length cDNA project: the Mammalian Gene Collection (MGC).</title>
        <authorList>
            <consortium name="The MGC Project Team"/>
        </authorList>
    </citation>
    <scope>NUCLEOTIDE SEQUENCE [LARGE SCALE MRNA] (ISOFORM 1)</scope>
    <scope>VARIANT ASP-365</scope>
    <source>
        <tissue>Skin</tissue>
        <tissue>Testis</tissue>
    </source>
</reference>
<reference key="5">
    <citation type="journal article" date="2008" name="J. Proteome Res.">
        <title>Combining protein-based IMAC, peptide-based IMAC, and MudPIT for efficient phosphoproteomic analysis.</title>
        <authorList>
            <person name="Cantin G.T."/>
            <person name="Yi W."/>
            <person name="Lu B."/>
            <person name="Park S.K."/>
            <person name="Xu T."/>
            <person name="Lee J.-D."/>
            <person name="Yates J.R. III"/>
        </authorList>
    </citation>
    <scope>PHOSPHORYLATION [LARGE SCALE ANALYSIS] AT SER-694</scope>
    <scope>IDENTIFICATION BY MASS SPECTROMETRY [LARGE SCALE ANALYSIS]</scope>
    <source>
        <tissue>Cervix carcinoma</tissue>
    </source>
</reference>
<reference key="6">
    <citation type="journal article" date="2008" name="Mol. Cell">
        <title>Kinase-selective enrichment enables quantitative phosphoproteomics of the kinome across the cell cycle.</title>
        <authorList>
            <person name="Daub H."/>
            <person name="Olsen J.V."/>
            <person name="Bairlein M."/>
            <person name="Gnad F."/>
            <person name="Oppermann F.S."/>
            <person name="Korner R."/>
            <person name="Greff Z."/>
            <person name="Keri G."/>
            <person name="Stemmann O."/>
            <person name="Mann M."/>
        </authorList>
    </citation>
    <scope>PHOSPHORYLATION [LARGE SCALE ANALYSIS] AT SER-422</scope>
    <scope>IDENTIFICATION BY MASS SPECTROMETRY [LARGE SCALE ANALYSIS]</scope>
    <source>
        <tissue>Cervix carcinoma</tissue>
    </source>
</reference>
<reference key="7">
    <citation type="journal article" date="2008" name="Proc. Natl. Acad. Sci. U.S.A.">
        <title>A quantitative atlas of mitotic phosphorylation.</title>
        <authorList>
            <person name="Dephoure N."/>
            <person name="Zhou C."/>
            <person name="Villen J."/>
            <person name="Beausoleil S.A."/>
            <person name="Bakalarski C.E."/>
            <person name="Elledge S.J."/>
            <person name="Gygi S.P."/>
        </authorList>
    </citation>
    <scope>PHOSPHORYLATION [LARGE SCALE ANALYSIS] AT SER-694</scope>
    <scope>IDENTIFICATION BY MASS SPECTROMETRY [LARGE SCALE ANALYSIS]</scope>
    <source>
        <tissue>Cervix carcinoma</tissue>
    </source>
</reference>
<reference key="8">
    <citation type="journal article" date="2010" name="Sci. Signal.">
        <title>Quantitative phosphoproteomics reveals widespread full phosphorylation site occupancy during mitosis.</title>
        <authorList>
            <person name="Olsen J.V."/>
            <person name="Vermeulen M."/>
            <person name="Santamaria A."/>
            <person name="Kumar C."/>
            <person name="Miller M.L."/>
            <person name="Jensen L.J."/>
            <person name="Gnad F."/>
            <person name="Cox J."/>
            <person name="Jensen T.S."/>
            <person name="Nigg E.A."/>
            <person name="Brunak S."/>
            <person name="Mann M."/>
        </authorList>
    </citation>
    <scope>PHOSPHORYLATION [LARGE SCALE ANALYSIS] AT SER-694</scope>
    <scope>IDENTIFICATION BY MASS SPECTROMETRY [LARGE SCALE ANALYSIS]</scope>
    <source>
        <tissue>Cervix carcinoma</tissue>
    </source>
</reference>
<reference key="9">
    <citation type="journal article" date="2012" name="J. Cell Biol.">
        <title>PtdIns4P synthesis by PI4KIIIalpha at the plasma membrane and its impact on plasma membrane identity.</title>
        <authorList>
            <person name="Nakatsu F."/>
            <person name="Baskin J.M."/>
            <person name="Chung J."/>
            <person name="Tanner L.B."/>
            <person name="Shui G."/>
            <person name="Lee S.Y."/>
            <person name="Pirruccello M."/>
            <person name="Hao M."/>
            <person name="Ingolia N.T."/>
            <person name="Wenk M.R."/>
            <person name="De Camilli P."/>
        </authorList>
    </citation>
    <scope>FUNCTION</scope>
    <scope>SUBCELLULAR LOCATION</scope>
    <scope>PALMITOYLATION</scope>
    <scope>MUTAGENESIS OF 6-CYS--CYS-9</scope>
</reference>
<reference key="10">
    <citation type="journal article" date="2013" name="J. Proteome Res.">
        <title>Toward a comprehensive characterization of a human cancer cell phosphoproteome.</title>
        <authorList>
            <person name="Zhou H."/>
            <person name="Di Palma S."/>
            <person name="Preisinger C."/>
            <person name="Peng M."/>
            <person name="Polat A.N."/>
            <person name="Heck A.J."/>
            <person name="Mohammed S."/>
        </authorList>
    </citation>
    <scope>PHOSPHORYLATION [LARGE SCALE ANALYSIS] AT SER-694</scope>
    <scope>IDENTIFICATION BY MASS SPECTROMETRY [LARGE SCALE ANALYSIS]</scope>
    <source>
        <tissue>Cervix carcinoma</tissue>
        <tissue>Erythroleukemia</tissue>
    </source>
</reference>
<reference key="11">
    <citation type="journal article" date="2014" name="Mol. Autism">
        <title>Rare deleterious mutations of the gene EFR3A in autism spectrum disorders.</title>
        <authorList>
            <person name="Gupta A.R."/>
            <person name="Pirruccello M."/>
            <person name="Cheng F."/>
            <person name="Kang H.J."/>
            <person name="Fernandez T.V."/>
            <person name="Baskin J.M."/>
            <person name="Choi M."/>
            <person name="Liu L."/>
            <person name="Ercan-Sencicek A.G."/>
            <person name="Murdoch J.D."/>
            <person name="Klei L."/>
            <person name="Neale B.M."/>
            <person name="Franjic D."/>
            <person name="Daly M.J."/>
            <person name="Lifton R.P."/>
            <person name="De Camilli P."/>
            <person name="Zhao H."/>
            <person name="Sestan N."/>
            <person name="State M.W."/>
        </authorList>
    </citation>
    <scope>POSSIBLE INVOLVEMENT IN AUTISM</scope>
    <scope>VARIANTS ARG-14; GLU-50; CYS-55; CYS-70; LEU-100; PRO-118; LEU-123; VAL-194; ALA-243; GLY-268; ASP-320; SER-321; LEU-337; SER-338; ASP-354; MET-451; GLY-504; PRO-508; VAL-510; ARG-528; TRP-532; THR-534; VAL-570; VAL-646 AND ALA-785</scope>
</reference>
<reference key="12">
    <citation type="journal article" date="2015" name="EMBO Rep.">
        <title>Plasticity of PI4KIIIalpha interactions at the plasma membrane.</title>
        <authorList>
            <person name="Chung J."/>
            <person name="Nakatsu F."/>
            <person name="Baskin J.M."/>
            <person name="De Camilli P."/>
        </authorList>
    </citation>
    <scope>FUNCTION</scope>
</reference>
<reference key="13">
    <citation type="journal article" date="2015" name="J. Cell Sci.">
        <title>EFR3s are palmitoylated plasma membrane proteins that control responsiveness to G-protein-coupled receptors.</title>
        <authorList>
            <person name="Bojjireddy N."/>
            <person name="Guzman-Hernandez M.L."/>
            <person name="Reinhard N.R."/>
            <person name="Jovic M."/>
            <person name="Balla T."/>
        </authorList>
    </citation>
    <scope>FUNCTION</scope>
    <scope>SUBCELLULAR LOCATION</scope>
    <scope>PALMITOYLATION</scope>
    <scope>MUTAGENESIS OF 6-CYS--CYS-9</scope>
</reference>
<reference key="14">
    <citation type="journal article" date="2016" name="Nat. Cell Biol.">
        <title>The leukodystrophy protein FAM126A (hyccin) regulates PtdIns(4)P synthesis at the plasma membrane.</title>
        <authorList>
            <person name="Baskin J.M."/>
            <person name="Wu X."/>
            <person name="Christiano R."/>
            <person name="Oh M.S."/>
            <person name="Schauder C.M."/>
            <person name="Gazzerro E."/>
            <person name="Messa M."/>
            <person name="Baldassari S."/>
            <person name="Assereto S."/>
            <person name="Biancheri R."/>
            <person name="Zara F."/>
            <person name="Minetti C."/>
            <person name="Raimondi A."/>
            <person name="Simons M."/>
            <person name="Walther T.C."/>
            <person name="Reinisch K.M."/>
            <person name="De Camilli P."/>
        </authorList>
    </citation>
    <scope>FUNCTION</scope>
    <scope>IDENTIFICATION IN THE PI4K COMPLEX</scope>
</reference>
<organism>
    <name type="scientific">Homo sapiens</name>
    <name type="common">Human</name>
    <dbReference type="NCBI Taxonomy" id="9606"/>
    <lineage>
        <taxon>Eukaryota</taxon>
        <taxon>Metazoa</taxon>
        <taxon>Chordata</taxon>
        <taxon>Craniata</taxon>
        <taxon>Vertebrata</taxon>
        <taxon>Euteleostomi</taxon>
        <taxon>Mammalia</taxon>
        <taxon>Eutheria</taxon>
        <taxon>Euarchontoglires</taxon>
        <taxon>Primates</taxon>
        <taxon>Haplorrhini</taxon>
        <taxon>Catarrhini</taxon>
        <taxon>Hominidae</taxon>
        <taxon>Homo</taxon>
    </lineage>
</organism>
<gene>
    <name evidence="13" type="primary">EFR3A</name>
    <name evidence="10" type="synonym">KIAA0143</name>
</gene>